<feature type="chain" id="PRO_0000317960" description="Putative lipase atg15">
    <location>
        <begin position="1"/>
        <end position="499"/>
    </location>
</feature>
<feature type="topological domain" description="Cytoplasmic" evidence="1">
    <location>
        <begin position="1"/>
        <end position="9"/>
    </location>
</feature>
<feature type="transmembrane region" description="Helical; Signal-anchor for type II membrane protein">
    <location>
        <begin position="10"/>
        <end position="30"/>
    </location>
</feature>
<feature type="topological domain" description="Lumenal" evidence="1">
    <location>
        <begin position="31"/>
        <end position="499"/>
    </location>
</feature>
<feature type="region of interest" description="Disordered" evidence="4">
    <location>
        <begin position="436"/>
        <end position="499"/>
    </location>
</feature>
<feature type="compositionally biased region" description="Low complexity" evidence="4">
    <location>
        <begin position="438"/>
        <end position="454"/>
    </location>
</feature>
<feature type="active site" description="Charge relay system" evidence="1">
    <location>
        <position position="290"/>
    </location>
</feature>
<feature type="glycosylation site" description="N-linked (GlcNAc...) asparagine" evidence="3">
    <location>
        <position position="170"/>
    </location>
</feature>
<feature type="glycosylation site" description="N-linked (GlcNAc...) asparagine" evidence="3">
    <location>
        <position position="191"/>
    </location>
</feature>
<feature type="glycosylation site" description="N-linked (GlcNAc...) asparagine" evidence="3">
    <location>
        <position position="192"/>
    </location>
</feature>
<feature type="glycosylation site" description="N-linked (GlcNAc...) asparagine" evidence="3">
    <location>
        <position position="250"/>
    </location>
</feature>
<feature type="glycosylation site" description="N-linked (GlcNAc...) asparagine" evidence="3">
    <location>
        <position position="274"/>
    </location>
</feature>
<feature type="glycosylation site" description="N-linked (GlcNAc...) asparagine" evidence="3">
    <location>
        <position position="436"/>
    </location>
</feature>
<keyword id="KW-0072">Autophagy</keyword>
<keyword id="KW-0967">Endosome</keyword>
<keyword id="KW-0325">Glycoprotein</keyword>
<keyword id="KW-0378">Hydrolase</keyword>
<keyword id="KW-0442">Lipid degradation</keyword>
<keyword id="KW-0443">Lipid metabolism</keyword>
<keyword id="KW-0472">Membrane</keyword>
<keyword id="KW-1185">Reference proteome</keyword>
<keyword id="KW-0735">Signal-anchor</keyword>
<keyword id="KW-0812">Transmembrane</keyword>
<keyword id="KW-1133">Transmembrane helix</keyword>
<comment type="function">
    <text evidence="1">Lipase which is essential for lysis of subvacuolar cytoplasm to vacuole targeted bodies and intravacuolar autophagic bodies. Involved in the lysis of intravacuolar multivesicular body (MVB) vesicles. The intravacuolar membrane disintegration by atg15 is critical to life span extension (By similarity).</text>
</comment>
<comment type="catalytic activity">
    <reaction>
        <text>a triacylglycerol + H2O = a diacylglycerol + a fatty acid + H(+)</text>
        <dbReference type="Rhea" id="RHEA:12044"/>
        <dbReference type="ChEBI" id="CHEBI:15377"/>
        <dbReference type="ChEBI" id="CHEBI:15378"/>
        <dbReference type="ChEBI" id="CHEBI:17855"/>
        <dbReference type="ChEBI" id="CHEBI:18035"/>
        <dbReference type="ChEBI" id="CHEBI:28868"/>
        <dbReference type="EC" id="3.1.1.3"/>
    </reaction>
</comment>
<comment type="subunit">
    <text evidence="1">Binds to both phosphatidylinositol (PI) and phosphatidylinositol 3,5-bisphosphate (PIP2).</text>
</comment>
<comment type="subcellular location">
    <subcellularLocation>
        <location evidence="2">Endosome</location>
        <location evidence="2">Multivesicular body membrane</location>
        <topology evidence="2">Single-pass type II membrane protein</topology>
    </subcellularLocation>
    <subcellularLocation>
        <location evidence="2">Prevacuolar compartment membrane</location>
        <topology evidence="2">Single-pass type II membrane protein</topology>
    </subcellularLocation>
    <text evidence="2">From ER, targeted to vacuolar lumen at the MVB vesicles via the Golgi and the prevacuolar compartment (PVC).</text>
</comment>
<comment type="similarity">
    <text evidence="5">Belongs to the AB hydrolase superfamily. Lipase family.</text>
</comment>
<name>ATG15_CHAGB</name>
<accession>Q2H6M8</accession>
<evidence type="ECO:0000250" key="1"/>
<evidence type="ECO:0000250" key="2">
    <source>
        <dbReference type="UniProtKB" id="P25641"/>
    </source>
</evidence>
<evidence type="ECO:0000255" key="3"/>
<evidence type="ECO:0000256" key="4">
    <source>
        <dbReference type="SAM" id="MobiDB-lite"/>
    </source>
</evidence>
<evidence type="ECO:0000305" key="5"/>
<reference key="1">
    <citation type="journal article" date="2015" name="Genome Announc.">
        <title>Draft genome sequence of the cellulolytic fungus Chaetomium globosum.</title>
        <authorList>
            <person name="Cuomo C.A."/>
            <person name="Untereiner W.A."/>
            <person name="Ma L.-J."/>
            <person name="Grabherr M."/>
            <person name="Birren B.W."/>
        </authorList>
    </citation>
    <scope>NUCLEOTIDE SEQUENCE [LARGE SCALE GENOMIC DNA]</scope>
    <source>
        <strain>ATCC 6205 / CBS 148.51 / DSM 1962 / NBRC 6347 / NRRL 1970</strain>
    </source>
</reference>
<protein>
    <recommendedName>
        <fullName>Putative lipase atg15</fullName>
        <ecNumber>3.1.1.3</ecNumber>
    </recommendedName>
    <alternativeName>
        <fullName>Autophagy-related protein 15</fullName>
    </alternativeName>
</protein>
<gene>
    <name type="primary">atg15</name>
    <name type="ORF">CHGG_05687</name>
</gene>
<proteinExistence type="inferred from homology"/>
<dbReference type="EC" id="3.1.1.3"/>
<dbReference type="EMBL" id="CH408031">
    <property type="protein sequence ID" value="EAQ89068.1"/>
    <property type="molecule type" value="Genomic_DNA"/>
</dbReference>
<dbReference type="RefSeq" id="XP_001221782.1">
    <property type="nucleotide sequence ID" value="XM_001221781.1"/>
</dbReference>
<dbReference type="FunCoup" id="Q2H6M8">
    <property type="interactions" value="48"/>
</dbReference>
<dbReference type="STRING" id="306901.Q2H6M8"/>
<dbReference type="ESTHER" id="chagb-atg15">
    <property type="family name" value="ATG15-related-lipase"/>
</dbReference>
<dbReference type="GlyCosmos" id="Q2H6M8">
    <property type="glycosylation" value="6 sites, No reported glycans"/>
</dbReference>
<dbReference type="GeneID" id="4390326"/>
<dbReference type="VEuPathDB" id="FungiDB:CHGG_05687"/>
<dbReference type="eggNOG" id="KOG4540">
    <property type="taxonomic scope" value="Eukaryota"/>
</dbReference>
<dbReference type="HOGENOM" id="CLU_028295_0_0_1"/>
<dbReference type="InParanoid" id="Q2H6M8"/>
<dbReference type="OMA" id="CHDCYNW"/>
<dbReference type="OrthoDB" id="58570at2759"/>
<dbReference type="Proteomes" id="UP000001056">
    <property type="component" value="Unassembled WGS sequence"/>
</dbReference>
<dbReference type="GO" id="GO:0005783">
    <property type="term" value="C:endoplasmic reticulum"/>
    <property type="evidence" value="ECO:0007669"/>
    <property type="project" value="EnsemblFungi"/>
</dbReference>
<dbReference type="GO" id="GO:0032585">
    <property type="term" value="C:multivesicular body membrane"/>
    <property type="evidence" value="ECO:0007669"/>
    <property type="project" value="UniProtKB-SubCell"/>
</dbReference>
<dbReference type="GO" id="GO:0005775">
    <property type="term" value="C:vacuolar lumen"/>
    <property type="evidence" value="ECO:0007669"/>
    <property type="project" value="EnsemblFungi"/>
</dbReference>
<dbReference type="GO" id="GO:0005774">
    <property type="term" value="C:vacuolar membrane"/>
    <property type="evidence" value="ECO:0007669"/>
    <property type="project" value="EnsemblFungi"/>
</dbReference>
<dbReference type="GO" id="GO:0004620">
    <property type="term" value="F:phospholipase activity"/>
    <property type="evidence" value="ECO:0007669"/>
    <property type="project" value="EnsemblFungi"/>
</dbReference>
<dbReference type="GO" id="GO:0004806">
    <property type="term" value="F:triacylglycerol lipase activity"/>
    <property type="evidence" value="ECO:0007669"/>
    <property type="project" value="UniProtKB-EC"/>
</dbReference>
<dbReference type="GO" id="GO:0034496">
    <property type="term" value="P:multivesicular body membrane disassembly"/>
    <property type="evidence" value="ECO:0007669"/>
    <property type="project" value="EnsemblFungi"/>
</dbReference>
<dbReference type="GO" id="GO:0046461">
    <property type="term" value="P:neutral lipid catabolic process"/>
    <property type="evidence" value="ECO:0007669"/>
    <property type="project" value="EnsemblFungi"/>
</dbReference>
<dbReference type="GO" id="GO:0000425">
    <property type="term" value="P:pexophagy"/>
    <property type="evidence" value="ECO:0007669"/>
    <property type="project" value="EnsemblFungi"/>
</dbReference>
<dbReference type="GO" id="GO:0006660">
    <property type="term" value="P:phosphatidylserine catabolic process"/>
    <property type="evidence" value="ECO:0007669"/>
    <property type="project" value="EnsemblFungi"/>
</dbReference>
<dbReference type="GO" id="GO:0034727">
    <property type="term" value="P:piecemeal microautophagy of the nucleus"/>
    <property type="evidence" value="ECO:0007669"/>
    <property type="project" value="EnsemblFungi"/>
</dbReference>
<dbReference type="GO" id="GO:0006624">
    <property type="term" value="P:vacuolar protein processing"/>
    <property type="evidence" value="ECO:0007669"/>
    <property type="project" value="EnsemblFungi"/>
</dbReference>
<dbReference type="CDD" id="cd00519">
    <property type="entry name" value="Lipase_3"/>
    <property type="match status" value="1"/>
</dbReference>
<dbReference type="FunFam" id="3.40.50.1820:FF:000129">
    <property type="entry name" value="Autophagy related lipase Atg15, putative"/>
    <property type="match status" value="1"/>
</dbReference>
<dbReference type="Gene3D" id="3.40.50.1820">
    <property type="entry name" value="alpha/beta hydrolase"/>
    <property type="match status" value="1"/>
</dbReference>
<dbReference type="InterPro" id="IPR029058">
    <property type="entry name" value="AB_hydrolase_fold"/>
</dbReference>
<dbReference type="InterPro" id="IPR050805">
    <property type="entry name" value="ATG15_Lipase"/>
</dbReference>
<dbReference type="InterPro" id="IPR002921">
    <property type="entry name" value="Fungal_lipase-type"/>
</dbReference>
<dbReference type="PANTHER" id="PTHR47175">
    <property type="entry name" value="LIPASE ATG15-RELATED"/>
    <property type="match status" value="1"/>
</dbReference>
<dbReference type="PANTHER" id="PTHR47175:SF2">
    <property type="entry name" value="LIPASE ATG15-RELATED"/>
    <property type="match status" value="1"/>
</dbReference>
<dbReference type="Pfam" id="PF01764">
    <property type="entry name" value="Lipase_3"/>
    <property type="match status" value="1"/>
</dbReference>
<dbReference type="SUPFAM" id="SSF53474">
    <property type="entry name" value="alpha/beta-Hydrolases"/>
    <property type="match status" value="1"/>
</dbReference>
<organism>
    <name type="scientific">Chaetomium globosum (strain ATCC 6205 / CBS 148.51 / DSM 1962 / NBRC 6347 / NRRL 1970)</name>
    <name type="common">Soil fungus</name>
    <dbReference type="NCBI Taxonomy" id="306901"/>
    <lineage>
        <taxon>Eukaryota</taxon>
        <taxon>Fungi</taxon>
        <taxon>Dikarya</taxon>
        <taxon>Ascomycota</taxon>
        <taxon>Pezizomycotina</taxon>
        <taxon>Sordariomycetes</taxon>
        <taxon>Sordariomycetidae</taxon>
        <taxon>Sordariales</taxon>
        <taxon>Chaetomiaceae</taxon>
        <taxon>Chaetomium</taxon>
    </lineage>
</organism>
<sequence length="499" mass="54141">MSIGEVSDSAGHLASLVLPIEVAPIAPLIPEPPATAEHIFTLRHVYHHGTHKHPSLHRKHDVTPSNADVWLAAEDGYEAERIGPLRARSNALRIQRLVDRRPSVVDPMVAQSRQQGFVSVLSPSAWTVDDVAGPDVTDKGTVLTMALMAANAYVEGPGKADWQDVGAPFNRSLDFGWEGDGLRGHVFADENNSTIVIGLKGTSPAVFDGDGTTTNDKVNDNLFFSCCCAQQGPWTWHQVCDCATGTYTCNNTCVTQALREENRYYQAARELYANVTEVYPDSHVWIAGHSLGGAVSSFLGLTYGVPVVTFQAVPDALPAGRLGLPVPPGADPNAPQSRDYTGAFHFGHTADPIYMGSCNGATASCSFAGYALESACHTGHECVYDTVGDKGWRVGIGTHKIVAVIRDVILKYDTVPECKFTPECRDCGNWKMYESNGTETTTTSSAPTTTSISRTRTETCKTPHLKSQQQRQRPRPRPLHALPQWEGGNPDSPERNEEM</sequence>